<feature type="chain" id="PRO_0000412225" description="Endoregulin">
    <location>
        <begin position="1"/>
        <end position="62"/>
    </location>
</feature>
<feature type="transmembrane region" description="Helical" evidence="2">
    <location>
        <begin position="25"/>
        <end position="45"/>
    </location>
</feature>
<comment type="function">
    <text evidence="1">Inhibits the activity of the calcium ATPases ATP2A2/SERCA2 and ATP2A3/SERCA3 by decreasing their apparent affinity for Ca(2+).</text>
</comment>
<comment type="subunit">
    <text evidence="1 3">Homooligomer (PubMed:36523160). Can also form heterooligomers with other sarcoplasmic/endoplasmic reticulum calcium ATPase (SERCA) regulators ARLN, PLN, SLN and STRIT1/DWORF (PubMed:36523160). Monomer (By similarity). Interacts as a monomer with ATP2A2/SERCA2; the interaction results in inhibition of ATP2A2 Ca(2+) affinity (By similarity).</text>
</comment>
<comment type="subcellular location">
    <subcellularLocation>
        <location evidence="1">Endoplasmic reticulum membrane</location>
        <topology evidence="2">Single-pass membrane protein</topology>
    </subcellularLocation>
</comment>
<accession>P0DI80</accession>
<dbReference type="EMBL" id="AK131023">
    <property type="status" value="NOT_ANNOTATED_CDS"/>
    <property type="molecule type" value="mRNA"/>
</dbReference>
<dbReference type="EMBL" id="AC087749">
    <property type="status" value="NOT_ANNOTATED_CDS"/>
    <property type="molecule type" value="Genomic_DNA"/>
</dbReference>
<dbReference type="CCDS" id="CCDS54166.1"/>
<dbReference type="RefSeq" id="NP_001156469.1">
    <property type="nucleotide sequence ID" value="NM_001162997.2"/>
</dbReference>
<dbReference type="RefSeq" id="XP_005256960.1">
    <property type="nucleotide sequence ID" value="XM_005256903.4"/>
</dbReference>
<dbReference type="SMR" id="P0DI80"/>
<dbReference type="STRING" id="9606.ENSP00000463361"/>
<dbReference type="TCDB" id="1.A.113.5.1">
    <property type="family name" value="the small integral membrane protein (simp) family"/>
</dbReference>
<dbReference type="BioMuta" id="SMIM6"/>
<dbReference type="MassIVE" id="P0DI80"/>
<dbReference type="PaxDb" id="9606-ENSP00000463361"/>
<dbReference type="PeptideAtlas" id="P0DI80"/>
<dbReference type="ProteomicsDB" id="52530"/>
<dbReference type="Antibodypedia" id="74683">
    <property type="antibodies" value="4 antibodies from 4 providers"/>
</dbReference>
<dbReference type="DNASU" id="100130933"/>
<dbReference type="Ensembl" id="ENST00000556126.2">
    <property type="protein sequence ID" value="ENSP00000450581.2"/>
    <property type="gene ID" value="ENSG00000259120.3"/>
</dbReference>
<dbReference type="Ensembl" id="ENST00000579469.2">
    <property type="protein sequence ID" value="ENSP00000463361.1"/>
    <property type="gene ID" value="ENSG00000259120.3"/>
</dbReference>
<dbReference type="GeneID" id="100130933"/>
<dbReference type="KEGG" id="hsa:100130933"/>
<dbReference type="MANE-Select" id="ENST00000579469.2">
    <property type="protein sequence ID" value="ENSP00000463361.1"/>
    <property type="RefSeq nucleotide sequence ID" value="NM_001162997.2"/>
    <property type="RefSeq protein sequence ID" value="NP_001156469.1"/>
</dbReference>
<dbReference type="UCSC" id="uc002joy.4">
    <property type="organism name" value="human"/>
</dbReference>
<dbReference type="AGR" id="HGNC:40032"/>
<dbReference type="CTD" id="100130933"/>
<dbReference type="GeneCards" id="ERLN"/>
<dbReference type="HGNC" id="HGNC:40032">
    <property type="gene designation" value="ERLN"/>
</dbReference>
<dbReference type="HPA" id="ENSG00000259120">
    <property type="expression patterns" value="Tissue enhanced (fallopian tube, kidney, stomach, testis)"/>
</dbReference>
<dbReference type="MIM" id="620531">
    <property type="type" value="gene"/>
</dbReference>
<dbReference type="neXtProt" id="NX_P0DI80"/>
<dbReference type="OpenTargets" id="ENSG00000259120"/>
<dbReference type="VEuPathDB" id="HostDB:ENSG00000259120"/>
<dbReference type="eggNOG" id="ENOG502RWMW">
    <property type="taxonomic scope" value="Eukaryota"/>
</dbReference>
<dbReference type="GeneTree" id="ENSGT00940000165228"/>
<dbReference type="HOGENOM" id="CLU_210527_0_0_1"/>
<dbReference type="InParanoid" id="P0DI80"/>
<dbReference type="OMA" id="LMTKQDI"/>
<dbReference type="OrthoDB" id="9618375at2759"/>
<dbReference type="PAN-GO" id="P0DI80">
    <property type="GO annotations" value="0 GO annotations based on evolutionary models"/>
</dbReference>
<dbReference type="PhylomeDB" id="P0DI80"/>
<dbReference type="PathwayCommons" id="P0DI80"/>
<dbReference type="BioGRID-ORCS" id="100130933">
    <property type="hits" value="36 hits in 1131 CRISPR screens"/>
</dbReference>
<dbReference type="Pharos" id="P0DI80">
    <property type="development level" value="Tdark"/>
</dbReference>
<dbReference type="PRO" id="PR:P0DI80"/>
<dbReference type="Proteomes" id="UP000005640">
    <property type="component" value="Chromosome 17"/>
</dbReference>
<dbReference type="RNAct" id="P0DI80">
    <property type="molecule type" value="protein"/>
</dbReference>
<dbReference type="Bgee" id="ENSG00000259120">
    <property type="expression patterns" value="Expressed in sperm and 115 other cell types or tissues"/>
</dbReference>
<dbReference type="GO" id="GO:0005789">
    <property type="term" value="C:endoplasmic reticulum membrane"/>
    <property type="evidence" value="ECO:0007669"/>
    <property type="project" value="UniProtKB-SubCell"/>
</dbReference>
<gene>
    <name evidence="4" type="primary">ERLN</name>
    <name type="synonym">C17orf110</name>
    <name type="synonym">SMIM6</name>
</gene>
<name>ERLN_HUMAN</name>
<reference key="1">
    <citation type="journal article" date="2004" name="Nat. Genet.">
        <title>Complete sequencing and characterization of 21,243 full-length human cDNAs.</title>
        <authorList>
            <person name="Ota T."/>
            <person name="Suzuki Y."/>
            <person name="Nishikawa T."/>
            <person name="Otsuki T."/>
            <person name="Sugiyama T."/>
            <person name="Irie R."/>
            <person name="Wakamatsu A."/>
            <person name="Hayashi K."/>
            <person name="Sato H."/>
            <person name="Nagai K."/>
            <person name="Kimura K."/>
            <person name="Makita H."/>
            <person name="Sekine M."/>
            <person name="Obayashi M."/>
            <person name="Nishi T."/>
            <person name="Shibahara T."/>
            <person name="Tanaka T."/>
            <person name="Ishii S."/>
            <person name="Yamamoto J."/>
            <person name="Saito K."/>
            <person name="Kawai Y."/>
            <person name="Isono Y."/>
            <person name="Nakamura Y."/>
            <person name="Nagahari K."/>
            <person name="Murakami K."/>
            <person name="Yasuda T."/>
            <person name="Iwayanagi T."/>
            <person name="Wagatsuma M."/>
            <person name="Shiratori A."/>
            <person name="Sudo H."/>
            <person name="Hosoiri T."/>
            <person name="Kaku Y."/>
            <person name="Kodaira H."/>
            <person name="Kondo H."/>
            <person name="Sugawara M."/>
            <person name="Takahashi M."/>
            <person name="Kanda K."/>
            <person name="Yokoi T."/>
            <person name="Furuya T."/>
            <person name="Kikkawa E."/>
            <person name="Omura Y."/>
            <person name="Abe K."/>
            <person name="Kamihara K."/>
            <person name="Katsuta N."/>
            <person name="Sato K."/>
            <person name="Tanikawa M."/>
            <person name="Yamazaki M."/>
            <person name="Ninomiya K."/>
            <person name="Ishibashi T."/>
            <person name="Yamashita H."/>
            <person name="Murakawa K."/>
            <person name="Fujimori K."/>
            <person name="Tanai H."/>
            <person name="Kimata M."/>
            <person name="Watanabe M."/>
            <person name="Hiraoka S."/>
            <person name="Chiba Y."/>
            <person name="Ishida S."/>
            <person name="Ono Y."/>
            <person name="Takiguchi S."/>
            <person name="Watanabe S."/>
            <person name="Yosida M."/>
            <person name="Hotuta T."/>
            <person name="Kusano J."/>
            <person name="Kanehori K."/>
            <person name="Takahashi-Fujii A."/>
            <person name="Hara H."/>
            <person name="Tanase T.-O."/>
            <person name="Nomura Y."/>
            <person name="Togiya S."/>
            <person name="Komai F."/>
            <person name="Hara R."/>
            <person name="Takeuchi K."/>
            <person name="Arita M."/>
            <person name="Imose N."/>
            <person name="Musashino K."/>
            <person name="Yuuki H."/>
            <person name="Oshima A."/>
            <person name="Sasaki N."/>
            <person name="Aotsuka S."/>
            <person name="Yoshikawa Y."/>
            <person name="Matsunawa H."/>
            <person name="Ichihara T."/>
            <person name="Shiohata N."/>
            <person name="Sano S."/>
            <person name="Moriya S."/>
            <person name="Momiyama H."/>
            <person name="Satoh N."/>
            <person name="Takami S."/>
            <person name="Terashima Y."/>
            <person name="Suzuki O."/>
            <person name="Nakagawa S."/>
            <person name="Senoh A."/>
            <person name="Mizoguchi H."/>
            <person name="Goto Y."/>
            <person name="Shimizu F."/>
            <person name="Wakebe H."/>
            <person name="Hishigaki H."/>
            <person name="Watanabe T."/>
            <person name="Sugiyama A."/>
            <person name="Takemoto M."/>
            <person name="Kawakami B."/>
            <person name="Yamazaki M."/>
            <person name="Watanabe K."/>
            <person name="Kumagai A."/>
            <person name="Itakura S."/>
            <person name="Fukuzumi Y."/>
            <person name="Fujimori Y."/>
            <person name="Komiyama M."/>
            <person name="Tashiro H."/>
            <person name="Tanigami A."/>
            <person name="Fujiwara T."/>
            <person name="Ono T."/>
            <person name="Yamada K."/>
            <person name="Fujii Y."/>
            <person name="Ozaki K."/>
            <person name="Hirao M."/>
            <person name="Ohmori Y."/>
            <person name="Kawabata A."/>
            <person name="Hikiji T."/>
            <person name="Kobatake N."/>
            <person name="Inagaki H."/>
            <person name="Ikema Y."/>
            <person name="Okamoto S."/>
            <person name="Okitani R."/>
            <person name="Kawakami T."/>
            <person name="Noguchi S."/>
            <person name="Itoh T."/>
            <person name="Shigeta K."/>
            <person name="Senba T."/>
            <person name="Matsumura K."/>
            <person name="Nakajima Y."/>
            <person name="Mizuno T."/>
            <person name="Morinaga M."/>
            <person name="Sasaki M."/>
            <person name="Togashi T."/>
            <person name="Oyama M."/>
            <person name="Hata H."/>
            <person name="Watanabe M."/>
            <person name="Komatsu T."/>
            <person name="Mizushima-Sugano J."/>
            <person name="Satoh T."/>
            <person name="Shirai Y."/>
            <person name="Takahashi Y."/>
            <person name="Nakagawa K."/>
            <person name="Okumura K."/>
            <person name="Nagase T."/>
            <person name="Nomura N."/>
            <person name="Kikuchi H."/>
            <person name="Masuho Y."/>
            <person name="Yamashita R."/>
            <person name="Nakai K."/>
            <person name="Yada T."/>
            <person name="Nakamura Y."/>
            <person name="Ohara O."/>
            <person name="Isogai T."/>
            <person name="Sugano S."/>
        </authorList>
    </citation>
    <scope>NUCLEOTIDE SEQUENCE [LARGE SCALE MRNA]</scope>
    <source>
        <tissue>Testis</tissue>
    </source>
</reference>
<reference key="2">
    <citation type="journal article" date="2006" name="Nature">
        <title>DNA sequence of human chromosome 17 and analysis of rearrangement in the human lineage.</title>
        <authorList>
            <person name="Zody M.C."/>
            <person name="Garber M."/>
            <person name="Adams D.J."/>
            <person name="Sharpe T."/>
            <person name="Harrow J."/>
            <person name="Lupski J.R."/>
            <person name="Nicholson C."/>
            <person name="Searle S.M."/>
            <person name="Wilming L."/>
            <person name="Young S.K."/>
            <person name="Abouelleil A."/>
            <person name="Allen N.R."/>
            <person name="Bi W."/>
            <person name="Bloom T."/>
            <person name="Borowsky M.L."/>
            <person name="Bugalter B.E."/>
            <person name="Butler J."/>
            <person name="Chang J.L."/>
            <person name="Chen C.-K."/>
            <person name="Cook A."/>
            <person name="Corum B."/>
            <person name="Cuomo C.A."/>
            <person name="de Jong P.J."/>
            <person name="DeCaprio D."/>
            <person name="Dewar K."/>
            <person name="FitzGerald M."/>
            <person name="Gilbert J."/>
            <person name="Gibson R."/>
            <person name="Gnerre S."/>
            <person name="Goldstein S."/>
            <person name="Grafham D.V."/>
            <person name="Grocock R."/>
            <person name="Hafez N."/>
            <person name="Hagopian D.S."/>
            <person name="Hart E."/>
            <person name="Norman C.H."/>
            <person name="Humphray S."/>
            <person name="Jaffe D.B."/>
            <person name="Jones M."/>
            <person name="Kamal M."/>
            <person name="Khodiyar V.K."/>
            <person name="LaButti K."/>
            <person name="Laird G."/>
            <person name="Lehoczky J."/>
            <person name="Liu X."/>
            <person name="Lokyitsang T."/>
            <person name="Loveland J."/>
            <person name="Lui A."/>
            <person name="Macdonald P."/>
            <person name="Major J.E."/>
            <person name="Matthews L."/>
            <person name="Mauceli E."/>
            <person name="McCarroll S.A."/>
            <person name="Mihalev A.H."/>
            <person name="Mudge J."/>
            <person name="Nguyen C."/>
            <person name="Nicol R."/>
            <person name="O'Leary S.B."/>
            <person name="Osoegawa K."/>
            <person name="Schwartz D.C."/>
            <person name="Shaw-Smith C."/>
            <person name="Stankiewicz P."/>
            <person name="Steward C."/>
            <person name="Swarbreck D."/>
            <person name="Venkataraman V."/>
            <person name="Whittaker C.A."/>
            <person name="Yang X."/>
            <person name="Zimmer A.R."/>
            <person name="Bradley A."/>
            <person name="Hubbard T."/>
            <person name="Birren B.W."/>
            <person name="Rogers J."/>
            <person name="Lander E.S."/>
            <person name="Nusbaum C."/>
        </authorList>
    </citation>
    <scope>NUCLEOTIDE SEQUENCE [LARGE SCALE GENOMIC DNA]</scope>
</reference>
<reference key="3">
    <citation type="journal article" date="2023" name="Biophys. J.">
        <title>Micropeptide hetero-oligomerization adds complexity to the calcium pump regulatory network.</title>
        <authorList>
            <person name="Phillips T.A."/>
            <person name="Hauck G.T."/>
            <person name="Pribadi M.P."/>
            <person name="Cho E.E."/>
            <person name="Cleary S.R."/>
            <person name="Robia S.L."/>
        </authorList>
    </citation>
    <scope>SUBUNIT</scope>
</reference>
<proteinExistence type="evidence at protein level"/>
<evidence type="ECO:0000250" key="1">
    <source>
        <dbReference type="UniProtKB" id="Q3U0I6"/>
    </source>
</evidence>
<evidence type="ECO:0000255" key="2"/>
<evidence type="ECO:0000269" key="3">
    <source>
    </source>
</evidence>
<evidence type="ECO:0000312" key="4">
    <source>
        <dbReference type="HGNC" id="HGNC:40032"/>
    </source>
</evidence>
<sequence>MDQLVFKETIWNDAFWQNPWDQGGLAVIILFITAVLLLILFAIVFGLLTSTENTQCEAGEEE</sequence>
<keyword id="KW-0256">Endoplasmic reticulum</keyword>
<keyword id="KW-0472">Membrane</keyword>
<keyword id="KW-1185">Reference proteome</keyword>
<keyword id="KW-0812">Transmembrane</keyword>
<keyword id="KW-1133">Transmembrane helix</keyword>
<protein>
    <recommendedName>
        <fullName evidence="1">Endoregulin</fullName>
        <shortName evidence="1">ELN</shortName>
    </recommendedName>
    <alternativeName>
        <fullName evidence="4">Small integral membrane protein 6</fullName>
    </alternativeName>
</protein>
<organism>
    <name type="scientific">Homo sapiens</name>
    <name type="common">Human</name>
    <dbReference type="NCBI Taxonomy" id="9606"/>
    <lineage>
        <taxon>Eukaryota</taxon>
        <taxon>Metazoa</taxon>
        <taxon>Chordata</taxon>
        <taxon>Craniata</taxon>
        <taxon>Vertebrata</taxon>
        <taxon>Euteleostomi</taxon>
        <taxon>Mammalia</taxon>
        <taxon>Eutheria</taxon>
        <taxon>Euarchontoglires</taxon>
        <taxon>Primates</taxon>
        <taxon>Haplorrhini</taxon>
        <taxon>Catarrhini</taxon>
        <taxon>Hominidae</taxon>
        <taxon>Homo</taxon>
    </lineage>
</organism>